<proteinExistence type="inferred from homology"/>
<accession>A1ISU7</accession>
<name>DAPE_NEIMA</name>
<keyword id="KW-0028">Amino-acid biosynthesis</keyword>
<keyword id="KW-0170">Cobalt</keyword>
<keyword id="KW-0220">Diaminopimelate biosynthesis</keyword>
<keyword id="KW-0378">Hydrolase</keyword>
<keyword id="KW-0457">Lysine biosynthesis</keyword>
<keyword id="KW-0479">Metal-binding</keyword>
<keyword id="KW-0862">Zinc</keyword>
<feature type="chain" id="PRO_0000375623" description="Succinyl-diaminopimelate desuccinylase">
    <location>
        <begin position="1"/>
        <end position="381"/>
    </location>
</feature>
<feature type="active site" evidence="1">
    <location>
        <position position="70"/>
    </location>
</feature>
<feature type="active site" description="Proton acceptor" evidence="1">
    <location>
        <position position="135"/>
    </location>
</feature>
<feature type="binding site" evidence="1">
    <location>
        <position position="68"/>
    </location>
    <ligand>
        <name>Zn(2+)</name>
        <dbReference type="ChEBI" id="CHEBI:29105"/>
        <label>1</label>
    </ligand>
</feature>
<feature type="binding site" evidence="1">
    <location>
        <position position="101"/>
    </location>
    <ligand>
        <name>Zn(2+)</name>
        <dbReference type="ChEBI" id="CHEBI:29105"/>
        <label>1</label>
    </ligand>
</feature>
<feature type="binding site" evidence="1">
    <location>
        <position position="101"/>
    </location>
    <ligand>
        <name>Zn(2+)</name>
        <dbReference type="ChEBI" id="CHEBI:29105"/>
        <label>2</label>
    </ligand>
</feature>
<feature type="binding site" evidence="1">
    <location>
        <position position="136"/>
    </location>
    <ligand>
        <name>Zn(2+)</name>
        <dbReference type="ChEBI" id="CHEBI:29105"/>
        <label>2</label>
    </ligand>
</feature>
<feature type="binding site" evidence="1">
    <location>
        <position position="164"/>
    </location>
    <ligand>
        <name>Zn(2+)</name>
        <dbReference type="ChEBI" id="CHEBI:29105"/>
        <label>1</label>
    </ligand>
</feature>
<feature type="binding site" evidence="1">
    <location>
        <position position="350"/>
    </location>
    <ligand>
        <name>Zn(2+)</name>
        <dbReference type="ChEBI" id="CHEBI:29105"/>
        <label>2</label>
    </ligand>
</feature>
<protein>
    <recommendedName>
        <fullName evidence="1">Succinyl-diaminopimelate desuccinylase</fullName>
        <shortName evidence="1">SDAP desuccinylase</shortName>
        <ecNumber evidence="1">3.5.1.18</ecNumber>
    </recommendedName>
    <alternativeName>
        <fullName evidence="1">N-succinyl-LL-2,6-diaminoheptanedioate amidohydrolase</fullName>
    </alternativeName>
</protein>
<dbReference type="EC" id="3.5.1.18" evidence="1"/>
<dbReference type="EMBL" id="AL157959">
    <property type="protein sequence ID" value="CAM08859.1"/>
    <property type="molecule type" value="Genomic_DNA"/>
</dbReference>
<dbReference type="PIR" id="B81797">
    <property type="entry name" value="B81797"/>
</dbReference>
<dbReference type="RefSeq" id="WP_002247015.1">
    <property type="nucleotide sequence ID" value="NC_003116.1"/>
</dbReference>
<dbReference type="SMR" id="A1ISU7"/>
<dbReference type="EnsemblBacteria" id="CAM08859">
    <property type="protein sequence ID" value="CAM08859"/>
    <property type="gene ID" value="NMA1730"/>
</dbReference>
<dbReference type="GeneID" id="93387847"/>
<dbReference type="KEGG" id="nma:NMA1730"/>
<dbReference type="HOGENOM" id="CLU_021802_4_0_4"/>
<dbReference type="UniPathway" id="UPA00034">
    <property type="reaction ID" value="UER00021"/>
</dbReference>
<dbReference type="Proteomes" id="UP000000626">
    <property type="component" value="Chromosome"/>
</dbReference>
<dbReference type="GO" id="GO:0008777">
    <property type="term" value="F:acetylornithine deacetylase activity"/>
    <property type="evidence" value="ECO:0007669"/>
    <property type="project" value="TreeGrafter"/>
</dbReference>
<dbReference type="GO" id="GO:0050897">
    <property type="term" value="F:cobalt ion binding"/>
    <property type="evidence" value="ECO:0007669"/>
    <property type="project" value="UniProtKB-UniRule"/>
</dbReference>
<dbReference type="GO" id="GO:0009014">
    <property type="term" value="F:succinyl-diaminopimelate desuccinylase activity"/>
    <property type="evidence" value="ECO:0007669"/>
    <property type="project" value="UniProtKB-UniRule"/>
</dbReference>
<dbReference type="GO" id="GO:0008270">
    <property type="term" value="F:zinc ion binding"/>
    <property type="evidence" value="ECO:0007669"/>
    <property type="project" value="UniProtKB-UniRule"/>
</dbReference>
<dbReference type="GO" id="GO:0019877">
    <property type="term" value="P:diaminopimelate biosynthetic process"/>
    <property type="evidence" value="ECO:0007669"/>
    <property type="project" value="UniProtKB-UniRule"/>
</dbReference>
<dbReference type="GO" id="GO:0006526">
    <property type="term" value="P:L-arginine biosynthetic process"/>
    <property type="evidence" value="ECO:0007669"/>
    <property type="project" value="TreeGrafter"/>
</dbReference>
<dbReference type="GO" id="GO:0009089">
    <property type="term" value="P:lysine biosynthetic process via diaminopimelate"/>
    <property type="evidence" value="ECO:0007669"/>
    <property type="project" value="UniProtKB-UniRule"/>
</dbReference>
<dbReference type="CDD" id="cd03891">
    <property type="entry name" value="M20_DapE_proteobac"/>
    <property type="match status" value="1"/>
</dbReference>
<dbReference type="FunFam" id="3.30.70.360:FF:000011">
    <property type="entry name" value="Succinyl-diaminopimelate desuccinylase"/>
    <property type="match status" value="1"/>
</dbReference>
<dbReference type="FunFam" id="3.40.630.10:FF:000005">
    <property type="entry name" value="Succinyl-diaminopimelate desuccinylase"/>
    <property type="match status" value="1"/>
</dbReference>
<dbReference type="FunFam" id="3.40.630.10:FF:000010">
    <property type="entry name" value="Succinyl-diaminopimelate desuccinylase"/>
    <property type="match status" value="1"/>
</dbReference>
<dbReference type="Gene3D" id="3.40.630.10">
    <property type="entry name" value="Zn peptidases"/>
    <property type="match status" value="2"/>
</dbReference>
<dbReference type="HAMAP" id="MF_01690">
    <property type="entry name" value="DapE"/>
    <property type="match status" value="1"/>
</dbReference>
<dbReference type="InterPro" id="IPR036264">
    <property type="entry name" value="Bact_exopeptidase_dim_dom"/>
</dbReference>
<dbReference type="InterPro" id="IPR005941">
    <property type="entry name" value="DapE_proteobac"/>
</dbReference>
<dbReference type="InterPro" id="IPR002933">
    <property type="entry name" value="Peptidase_M20"/>
</dbReference>
<dbReference type="InterPro" id="IPR011650">
    <property type="entry name" value="Peptidase_M20_dimer"/>
</dbReference>
<dbReference type="InterPro" id="IPR050072">
    <property type="entry name" value="Peptidase_M20A"/>
</dbReference>
<dbReference type="NCBIfam" id="TIGR01246">
    <property type="entry name" value="dapE_proteo"/>
    <property type="match status" value="1"/>
</dbReference>
<dbReference type="NCBIfam" id="NF009557">
    <property type="entry name" value="PRK13009.1"/>
    <property type="match status" value="1"/>
</dbReference>
<dbReference type="PANTHER" id="PTHR43808">
    <property type="entry name" value="ACETYLORNITHINE DEACETYLASE"/>
    <property type="match status" value="1"/>
</dbReference>
<dbReference type="PANTHER" id="PTHR43808:SF31">
    <property type="entry name" value="N-ACETYL-L-CITRULLINE DEACETYLASE"/>
    <property type="match status" value="1"/>
</dbReference>
<dbReference type="Pfam" id="PF07687">
    <property type="entry name" value="M20_dimer"/>
    <property type="match status" value="1"/>
</dbReference>
<dbReference type="Pfam" id="PF01546">
    <property type="entry name" value="Peptidase_M20"/>
    <property type="match status" value="1"/>
</dbReference>
<dbReference type="SUPFAM" id="SSF55031">
    <property type="entry name" value="Bacterial exopeptidase dimerisation domain"/>
    <property type="match status" value="1"/>
</dbReference>
<dbReference type="SUPFAM" id="SSF53187">
    <property type="entry name" value="Zn-dependent exopeptidases"/>
    <property type="match status" value="1"/>
</dbReference>
<organism>
    <name type="scientific">Neisseria meningitidis serogroup A / serotype 4A (strain DSM 15465 / Z2491)</name>
    <dbReference type="NCBI Taxonomy" id="122587"/>
    <lineage>
        <taxon>Bacteria</taxon>
        <taxon>Pseudomonadati</taxon>
        <taxon>Pseudomonadota</taxon>
        <taxon>Betaproteobacteria</taxon>
        <taxon>Neisseriales</taxon>
        <taxon>Neisseriaceae</taxon>
        <taxon>Neisseria</taxon>
    </lineage>
</organism>
<reference key="1">
    <citation type="journal article" date="2000" name="Nature">
        <title>Complete DNA sequence of a serogroup A strain of Neisseria meningitidis Z2491.</title>
        <authorList>
            <person name="Parkhill J."/>
            <person name="Achtman M."/>
            <person name="James K.D."/>
            <person name="Bentley S.D."/>
            <person name="Churcher C.M."/>
            <person name="Klee S.R."/>
            <person name="Morelli G."/>
            <person name="Basham D."/>
            <person name="Brown D."/>
            <person name="Chillingworth T."/>
            <person name="Davies R.M."/>
            <person name="Davis P."/>
            <person name="Devlin K."/>
            <person name="Feltwell T."/>
            <person name="Hamlin N."/>
            <person name="Holroyd S."/>
            <person name="Jagels K."/>
            <person name="Leather S."/>
            <person name="Moule S."/>
            <person name="Mungall K.L."/>
            <person name="Quail M.A."/>
            <person name="Rajandream M.A."/>
            <person name="Rutherford K.M."/>
            <person name="Simmonds M."/>
            <person name="Skelton J."/>
            <person name="Whitehead S."/>
            <person name="Spratt B.G."/>
            <person name="Barrell B.G."/>
        </authorList>
    </citation>
    <scope>NUCLEOTIDE SEQUENCE [LARGE SCALE GENOMIC DNA]</scope>
    <source>
        <strain>DSM 15465 / Z2491</strain>
    </source>
</reference>
<gene>
    <name evidence="1" type="primary">dapE</name>
    <name type="ordered locus">NMA1730</name>
</gene>
<evidence type="ECO:0000255" key="1">
    <source>
        <dbReference type="HAMAP-Rule" id="MF_01690"/>
    </source>
</evidence>
<comment type="function">
    <text evidence="1">Catalyzes the hydrolysis of N-succinyl-L,L-diaminopimelic acid (SDAP), forming succinate and LL-2,6-diaminopimelate (DAP), an intermediate involved in the bacterial biosynthesis of lysine and meso-diaminopimelic acid, an essential component of bacterial cell walls.</text>
</comment>
<comment type="catalytic activity">
    <reaction evidence="1">
        <text>N-succinyl-(2S,6S)-2,6-diaminopimelate + H2O = (2S,6S)-2,6-diaminopimelate + succinate</text>
        <dbReference type="Rhea" id="RHEA:22608"/>
        <dbReference type="ChEBI" id="CHEBI:15377"/>
        <dbReference type="ChEBI" id="CHEBI:30031"/>
        <dbReference type="ChEBI" id="CHEBI:57609"/>
        <dbReference type="ChEBI" id="CHEBI:58087"/>
        <dbReference type="EC" id="3.5.1.18"/>
    </reaction>
</comment>
<comment type="cofactor">
    <cofactor evidence="1">
        <name>Zn(2+)</name>
        <dbReference type="ChEBI" id="CHEBI:29105"/>
    </cofactor>
    <cofactor evidence="1">
        <name>Co(2+)</name>
        <dbReference type="ChEBI" id="CHEBI:48828"/>
    </cofactor>
    <text evidence="1">Binds 2 Zn(2+) or Co(2+) ions per subunit.</text>
</comment>
<comment type="pathway">
    <text evidence="1">Amino-acid biosynthesis; L-lysine biosynthesis via DAP pathway; LL-2,6-diaminopimelate from (S)-tetrahydrodipicolinate (succinylase route): step 3/3.</text>
</comment>
<comment type="subunit">
    <text evidence="1">Homodimer.</text>
</comment>
<comment type="similarity">
    <text evidence="1">Belongs to the peptidase M20A family. DapE subfamily.</text>
</comment>
<sequence>MTETQSLELAKALISRPSVTPDDRDCQKLLVERLYKIGFAAEELHFGDTKNIWLRRGTKVPVVCFAGHTDVVPTGPVEKWDSPPFEPTERDGRLYGRGAADMKTSIACFVTACERFVAEHPDHQGSIALLITSDEEGDALDGTTKVVDVLKARGELIDYCIVGEPTAVDKLGDMIKNGRRGSLSGNLTVKGKQGHIAYPHLAINPVHTFAPALLELTQEVWDEGNKYFPPTSFQISNINGGTGATNVIPGELNVKFNFRFSTESTEAGLKQRVHAILDKHGVQYDLQWSCSGQPFLTQAGKLTDVARAAIAETCGIEAELSTTGGTSDGRFIKAIAKELIELGPSNATIHQINENVRLDDIPKLSAVYEGILARLLAGNAV</sequence>